<gene>
    <name type="ordered locus">BB0289</name>
</gene>
<organism>
    <name type="scientific">Bordetella bronchiseptica (strain ATCC BAA-588 / NCTC 13252 / RB50)</name>
    <name type="common">Alcaligenes bronchisepticus</name>
    <dbReference type="NCBI Taxonomy" id="257310"/>
    <lineage>
        <taxon>Bacteria</taxon>
        <taxon>Pseudomonadati</taxon>
        <taxon>Pseudomonadota</taxon>
        <taxon>Betaproteobacteria</taxon>
        <taxon>Burkholderiales</taxon>
        <taxon>Alcaligenaceae</taxon>
        <taxon>Bordetella</taxon>
    </lineage>
</organism>
<evidence type="ECO:0000255" key="1">
    <source>
        <dbReference type="HAMAP-Rule" id="MF_01609"/>
    </source>
</evidence>
<evidence type="ECO:0000256" key="2">
    <source>
        <dbReference type="SAM" id="MobiDB-lite"/>
    </source>
</evidence>
<comment type="function">
    <text evidence="1">ATP-dependent carboxylate-amine ligase which exhibits weak glutamate--cysteine ligase activity.</text>
</comment>
<comment type="catalytic activity">
    <reaction evidence="1">
        <text>L-cysteine + L-glutamate + ATP = gamma-L-glutamyl-L-cysteine + ADP + phosphate + H(+)</text>
        <dbReference type="Rhea" id="RHEA:13285"/>
        <dbReference type="ChEBI" id="CHEBI:15378"/>
        <dbReference type="ChEBI" id="CHEBI:29985"/>
        <dbReference type="ChEBI" id="CHEBI:30616"/>
        <dbReference type="ChEBI" id="CHEBI:35235"/>
        <dbReference type="ChEBI" id="CHEBI:43474"/>
        <dbReference type="ChEBI" id="CHEBI:58173"/>
        <dbReference type="ChEBI" id="CHEBI:456216"/>
        <dbReference type="EC" id="6.3.2.2"/>
    </reaction>
</comment>
<comment type="similarity">
    <text evidence="1">Belongs to the glutamate--cysteine ligase type 2 family. YbdK subfamily.</text>
</comment>
<reference key="1">
    <citation type="journal article" date="2003" name="Nat. Genet.">
        <title>Comparative analysis of the genome sequences of Bordetella pertussis, Bordetella parapertussis and Bordetella bronchiseptica.</title>
        <authorList>
            <person name="Parkhill J."/>
            <person name="Sebaihia M."/>
            <person name="Preston A."/>
            <person name="Murphy L.D."/>
            <person name="Thomson N.R."/>
            <person name="Harris D.E."/>
            <person name="Holden M.T.G."/>
            <person name="Churcher C.M."/>
            <person name="Bentley S.D."/>
            <person name="Mungall K.L."/>
            <person name="Cerdeno-Tarraga A.-M."/>
            <person name="Temple L."/>
            <person name="James K.D."/>
            <person name="Harris B."/>
            <person name="Quail M.A."/>
            <person name="Achtman M."/>
            <person name="Atkin R."/>
            <person name="Baker S."/>
            <person name="Basham D."/>
            <person name="Bason N."/>
            <person name="Cherevach I."/>
            <person name="Chillingworth T."/>
            <person name="Collins M."/>
            <person name="Cronin A."/>
            <person name="Davis P."/>
            <person name="Doggett J."/>
            <person name="Feltwell T."/>
            <person name="Goble A."/>
            <person name="Hamlin N."/>
            <person name="Hauser H."/>
            <person name="Holroyd S."/>
            <person name="Jagels K."/>
            <person name="Leather S."/>
            <person name="Moule S."/>
            <person name="Norberczak H."/>
            <person name="O'Neil S."/>
            <person name="Ormond D."/>
            <person name="Price C."/>
            <person name="Rabbinowitsch E."/>
            <person name="Rutter S."/>
            <person name="Sanders M."/>
            <person name="Saunders D."/>
            <person name="Seeger K."/>
            <person name="Sharp S."/>
            <person name="Simmonds M."/>
            <person name="Skelton J."/>
            <person name="Squares R."/>
            <person name="Squares S."/>
            <person name="Stevens K."/>
            <person name="Unwin L."/>
            <person name="Whitehead S."/>
            <person name="Barrell B.G."/>
            <person name="Maskell D.J."/>
        </authorList>
    </citation>
    <scope>NUCLEOTIDE SEQUENCE [LARGE SCALE GENOMIC DNA]</scope>
    <source>
        <strain>ATCC BAA-588 / NCTC 13252 / RB50</strain>
    </source>
</reference>
<feature type="chain" id="PRO_0000218185" description="Putative glutamate--cysteine ligase 2">
    <location>
        <begin position="1"/>
        <end position="413"/>
    </location>
</feature>
<feature type="region of interest" description="Disordered" evidence="2">
    <location>
        <begin position="392"/>
        <end position="413"/>
    </location>
</feature>
<keyword id="KW-0067">ATP-binding</keyword>
<keyword id="KW-0436">Ligase</keyword>
<keyword id="KW-0547">Nucleotide-binding</keyword>
<proteinExistence type="inferred from homology"/>
<name>GCS2_BORBR</name>
<protein>
    <recommendedName>
        <fullName evidence="1">Putative glutamate--cysteine ligase 2</fullName>
        <ecNumber evidence="1">6.3.2.2</ecNumber>
    </recommendedName>
    <alternativeName>
        <fullName evidence="1">Gamma-glutamylcysteine synthetase 2</fullName>
        <shortName evidence="1">GCS 2</shortName>
        <shortName evidence="1">Gamma-GCS 2</shortName>
    </alternativeName>
</protein>
<dbReference type="EC" id="6.3.2.2" evidence="1"/>
<dbReference type="EMBL" id="BX640437">
    <property type="protein sequence ID" value="CAE30787.1"/>
    <property type="molecule type" value="Genomic_DNA"/>
</dbReference>
<dbReference type="RefSeq" id="WP_003807407.1">
    <property type="nucleotide sequence ID" value="NC_002927.3"/>
</dbReference>
<dbReference type="SMR" id="Q7WQP1"/>
<dbReference type="KEGG" id="bbr:BB0289"/>
<dbReference type="eggNOG" id="COG2170">
    <property type="taxonomic scope" value="Bacteria"/>
</dbReference>
<dbReference type="HOGENOM" id="CLU_044848_1_1_4"/>
<dbReference type="Proteomes" id="UP000001027">
    <property type="component" value="Chromosome"/>
</dbReference>
<dbReference type="GO" id="GO:0005524">
    <property type="term" value="F:ATP binding"/>
    <property type="evidence" value="ECO:0007669"/>
    <property type="project" value="UniProtKB-KW"/>
</dbReference>
<dbReference type="GO" id="GO:0004357">
    <property type="term" value="F:glutamate-cysteine ligase activity"/>
    <property type="evidence" value="ECO:0007669"/>
    <property type="project" value="UniProtKB-EC"/>
</dbReference>
<dbReference type="GO" id="GO:0042398">
    <property type="term" value="P:modified amino acid biosynthetic process"/>
    <property type="evidence" value="ECO:0007669"/>
    <property type="project" value="InterPro"/>
</dbReference>
<dbReference type="Gene3D" id="3.30.590.20">
    <property type="match status" value="1"/>
</dbReference>
<dbReference type="HAMAP" id="MF_01609">
    <property type="entry name" value="Glu_cys_ligase_2"/>
    <property type="match status" value="1"/>
</dbReference>
<dbReference type="InterPro" id="IPR050141">
    <property type="entry name" value="GCL_type2/YbdK_subfam"/>
</dbReference>
<dbReference type="InterPro" id="IPR006336">
    <property type="entry name" value="GCS2"/>
</dbReference>
<dbReference type="InterPro" id="IPR014746">
    <property type="entry name" value="Gln_synth/guanido_kin_cat_dom"/>
</dbReference>
<dbReference type="InterPro" id="IPR011793">
    <property type="entry name" value="YbdK"/>
</dbReference>
<dbReference type="NCBIfam" id="TIGR02050">
    <property type="entry name" value="gshA_cyan_rel"/>
    <property type="match status" value="1"/>
</dbReference>
<dbReference type="NCBIfam" id="NF010040">
    <property type="entry name" value="PRK13516.1"/>
    <property type="match status" value="1"/>
</dbReference>
<dbReference type="PANTHER" id="PTHR36510">
    <property type="entry name" value="GLUTAMATE--CYSTEINE LIGASE 2-RELATED"/>
    <property type="match status" value="1"/>
</dbReference>
<dbReference type="PANTHER" id="PTHR36510:SF1">
    <property type="entry name" value="GLUTAMATE--CYSTEINE LIGASE 2-RELATED"/>
    <property type="match status" value="1"/>
</dbReference>
<dbReference type="Pfam" id="PF04107">
    <property type="entry name" value="GCS2"/>
    <property type="match status" value="1"/>
</dbReference>
<dbReference type="SUPFAM" id="SSF55931">
    <property type="entry name" value="Glutamine synthetase/guanido kinase"/>
    <property type="match status" value="1"/>
</dbReference>
<accession>Q7WQP1</accession>
<sequence length="413" mass="45725">MEQIPFVSSAPNTLGIELELQLVDPRSFDLAAASDELLAQLANHPIADRVKPEITRSMIELNSSVHEHPAGLLAEMREMRDVLCEAADAVGVGVTGGGAHPFMRWQDRAISDTPRFQYLAEMYGYLARQFTVFGQHIHLGVPSGDAAVRMVRGLSPYVPHFIALSAASPYCEGVDTLFSCCRLNAVNSFPLAGHMPADVTDWYRFEAHLAQLRASGLAESIKDLYWDIRPKPEYGTVEIRVCDTPLTVERACQLAAFAQALAVQVARDPEPSQQAWLAYRSNHFQACRFGLHGSYVTPDGQRVRLVDHLRALFDRLAPVAEELGTGDMLQTLRDEILRNGNDARWLRGQFLKVRELPLVVESMAQNWRGQGVQDTPPSAVRRRIRATSEPVGGVCALSTPQGDPLPGWAERLH</sequence>